<proteinExistence type="inferred from homology"/>
<name>RS13_CAMJJ</name>
<dbReference type="EMBL" id="CP000538">
    <property type="protein sequence ID" value="EAQ72715.1"/>
    <property type="molecule type" value="Genomic_DNA"/>
</dbReference>
<dbReference type="RefSeq" id="WP_002856177.1">
    <property type="nucleotide sequence ID" value="NC_008787.1"/>
</dbReference>
<dbReference type="SMR" id="A1W1J4"/>
<dbReference type="KEGG" id="cjj:CJJ81176_1579"/>
<dbReference type="eggNOG" id="COG0099">
    <property type="taxonomic scope" value="Bacteria"/>
</dbReference>
<dbReference type="HOGENOM" id="CLU_103849_1_2_7"/>
<dbReference type="Proteomes" id="UP000000646">
    <property type="component" value="Chromosome"/>
</dbReference>
<dbReference type="GO" id="GO:0005829">
    <property type="term" value="C:cytosol"/>
    <property type="evidence" value="ECO:0007669"/>
    <property type="project" value="TreeGrafter"/>
</dbReference>
<dbReference type="GO" id="GO:0015935">
    <property type="term" value="C:small ribosomal subunit"/>
    <property type="evidence" value="ECO:0007669"/>
    <property type="project" value="TreeGrafter"/>
</dbReference>
<dbReference type="GO" id="GO:0019843">
    <property type="term" value="F:rRNA binding"/>
    <property type="evidence" value="ECO:0007669"/>
    <property type="project" value="UniProtKB-UniRule"/>
</dbReference>
<dbReference type="GO" id="GO:0003735">
    <property type="term" value="F:structural constituent of ribosome"/>
    <property type="evidence" value="ECO:0007669"/>
    <property type="project" value="InterPro"/>
</dbReference>
<dbReference type="GO" id="GO:0000049">
    <property type="term" value="F:tRNA binding"/>
    <property type="evidence" value="ECO:0007669"/>
    <property type="project" value="UniProtKB-UniRule"/>
</dbReference>
<dbReference type="GO" id="GO:0006412">
    <property type="term" value="P:translation"/>
    <property type="evidence" value="ECO:0007669"/>
    <property type="project" value="UniProtKB-UniRule"/>
</dbReference>
<dbReference type="FunFam" id="1.10.8.50:FF:000001">
    <property type="entry name" value="30S ribosomal protein S13"/>
    <property type="match status" value="1"/>
</dbReference>
<dbReference type="FunFam" id="4.10.910.10:FF:000001">
    <property type="entry name" value="30S ribosomal protein S13"/>
    <property type="match status" value="1"/>
</dbReference>
<dbReference type="Gene3D" id="1.10.8.50">
    <property type="match status" value="1"/>
</dbReference>
<dbReference type="Gene3D" id="4.10.910.10">
    <property type="entry name" value="30s ribosomal protein s13, domain 2"/>
    <property type="match status" value="1"/>
</dbReference>
<dbReference type="HAMAP" id="MF_01315">
    <property type="entry name" value="Ribosomal_uS13"/>
    <property type="match status" value="1"/>
</dbReference>
<dbReference type="InterPro" id="IPR027437">
    <property type="entry name" value="Rbsml_uS13_C"/>
</dbReference>
<dbReference type="InterPro" id="IPR001892">
    <property type="entry name" value="Ribosomal_uS13"/>
</dbReference>
<dbReference type="InterPro" id="IPR010979">
    <property type="entry name" value="Ribosomal_uS13-like_H2TH"/>
</dbReference>
<dbReference type="InterPro" id="IPR019980">
    <property type="entry name" value="Ribosomal_uS13_bac-type"/>
</dbReference>
<dbReference type="InterPro" id="IPR018269">
    <property type="entry name" value="Ribosomal_uS13_CS"/>
</dbReference>
<dbReference type="NCBIfam" id="TIGR03631">
    <property type="entry name" value="uS13_bact"/>
    <property type="match status" value="1"/>
</dbReference>
<dbReference type="PANTHER" id="PTHR10871">
    <property type="entry name" value="30S RIBOSOMAL PROTEIN S13/40S RIBOSOMAL PROTEIN S18"/>
    <property type="match status" value="1"/>
</dbReference>
<dbReference type="PANTHER" id="PTHR10871:SF1">
    <property type="entry name" value="SMALL RIBOSOMAL SUBUNIT PROTEIN US13M"/>
    <property type="match status" value="1"/>
</dbReference>
<dbReference type="Pfam" id="PF00416">
    <property type="entry name" value="Ribosomal_S13"/>
    <property type="match status" value="1"/>
</dbReference>
<dbReference type="PIRSF" id="PIRSF002134">
    <property type="entry name" value="Ribosomal_S13"/>
    <property type="match status" value="1"/>
</dbReference>
<dbReference type="SUPFAM" id="SSF46946">
    <property type="entry name" value="S13-like H2TH domain"/>
    <property type="match status" value="1"/>
</dbReference>
<dbReference type="PROSITE" id="PS00646">
    <property type="entry name" value="RIBOSOMAL_S13_1"/>
    <property type="match status" value="1"/>
</dbReference>
<dbReference type="PROSITE" id="PS50159">
    <property type="entry name" value="RIBOSOMAL_S13_2"/>
    <property type="match status" value="1"/>
</dbReference>
<organism>
    <name type="scientific">Campylobacter jejuni subsp. jejuni serotype O:23/36 (strain 81-176)</name>
    <dbReference type="NCBI Taxonomy" id="354242"/>
    <lineage>
        <taxon>Bacteria</taxon>
        <taxon>Pseudomonadati</taxon>
        <taxon>Campylobacterota</taxon>
        <taxon>Epsilonproteobacteria</taxon>
        <taxon>Campylobacterales</taxon>
        <taxon>Campylobacteraceae</taxon>
        <taxon>Campylobacter</taxon>
    </lineage>
</organism>
<gene>
    <name evidence="1" type="primary">rpsM</name>
    <name type="ordered locus">CJJ81176_1579</name>
</gene>
<feature type="chain" id="PRO_0000306582" description="Small ribosomal subunit protein uS13">
    <location>
        <begin position="1"/>
        <end position="121"/>
    </location>
</feature>
<feature type="region of interest" description="Disordered" evidence="2">
    <location>
        <begin position="95"/>
        <end position="121"/>
    </location>
</feature>
<evidence type="ECO:0000255" key="1">
    <source>
        <dbReference type="HAMAP-Rule" id="MF_01315"/>
    </source>
</evidence>
<evidence type="ECO:0000256" key="2">
    <source>
        <dbReference type="SAM" id="MobiDB-lite"/>
    </source>
</evidence>
<evidence type="ECO:0000305" key="3"/>
<sequence>MARIAGVDLPKKKRIEYGLTYIYGIGLFTSRKILDKVGISYNKRVHELSEDEAAAIRKEIQENYMVEGDLRKQVAMDIKALMDLGSFRGLRHRKGLPVRGQKTKTNARTRKGKRKTVGAKS</sequence>
<accession>A1W1J4</accession>
<comment type="function">
    <text evidence="1">Located at the top of the head of the 30S subunit, it contacts several helices of the 16S rRNA. In the 70S ribosome it contacts the 23S rRNA (bridge B1a) and protein L5 of the 50S subunit (bridge B1b), connecting the 2 subunits; these bridges are implicated in subunit movement. Contacts the tRNAs in the A and P-sites.</text>
</comment>
<comment type="subunit">
    <text evidence="1">Part of the 30S ribosomal subunit. Forms a loose heterodimer with protein S19. Forms two bridges to the 50S subunit in the 70S ribosome.</text>
</comment>
<comment type="similarity">
    <text evidence="1">Belongs to the universal ribosomal protein uS13 family.</text>
</comment>
<protein>
    <recommendedName>
        <fullName evidence="1">Small ribosomal subunit protein uS13</fullName>
    </recommendedName>
    <alternativeName>
        <fullName evidence="3">30S ribosomal protein S13</fullName>
    </alternativeName>
</protein>
<keyword id="KW-0687">Ribonucleoprotein</keyword>
<keyword id="KW-0689">Ribosomal protein</keyword>
<keyword id="KW-0694">RNA-binding</keyword>
<keyword id="KW-0699">rRNA-binding</keyword>
<keyword id="KW-0820">tRNA-binding</keyword>
<reference key="1">
    <citation type="submission" date="2006-12" db="EMBL/GenBank/DDBJ databases">
        <authorList>
            <person name="Fouts D.E."/>
            <person name="Nelson K.E."/>
            <person name="Sebastian Y."/>
        </authorList>
    </citation>
    <scope>NUCLEOTIDE SEQUENCE [LARGE SCALE GENOMIC DNA]</scope>
    <source>
        <strain>81-176</strain>
    </source>
</reference>